<accession>Q39140</accession>
<accession>Q9C7D1</accession>
<accession>Q9LHI1</accession>
<sequence length="330" mass="36850">MADTSSRTDVSTDGDTDHRDLGSDRGHMHAAASDSSDRSKDKLDQKTLRRLAQNREAARKSRLRKKAYVQQLENSRLKLTQLEQELQRARQQGVFISSSGDQAHSTGGNGALAFDAEHSRWLEEKNRQMNELRSALNAHAGDTELRIIVDGVMAHYEELFRIKSNAAKNDVFHLLSGMWKTPAERCFLWLGGFRSSELLKLLANQLEPMTERQVMGINSLQQTSQQAEDALSQGMESLQQSLADTLSSGTLGSSSSDNVASYMGQMAMAMGQLGTLEGFIRQADNLRLQTLQQMLRVLTTRQSARALLAIHDYSSRLRALSSLWLARPRE</sequence>
<proteinExistence type="evidence at protein level"/>
<organism>
    <name type="scientific">Arabidopsis thaliana</name>
    <name type="common">Mouse-ear cress</name>
    <dbReference type="NCBI Taxonomy" id="3702"/>
    <lineage>
        <taxon>Eukaryota</taxon>
        <taxon>Viridiplantae</taxon>
        <taxon>Streptophyta</taxon>
        <taxon>Embryophyta</taxon>
        <taxon>Tracheophyta</taxon>
        <taxon>Spermatophyta</taxon>
        <taxon>Magnoliopsida</taxon>
        <taxon>eudicotyledons</taxon>
        <taxon>Gunneridae</taxon>
        <taxon>Pentapetalae</taxon>
        <taxon>rosids</taxon>
        <taxon>malvids</taxon>
        <taxon>Brassicales</taxon>
        <taxon>Brassicaceae</taxon>
        <taxon>Camelineae</taxon>
        <taxon>Arabidopsis</taxon>
    </lineage>
</organism>
<evidence type="ECO:0000250" key="1"/>
<evidence type="ECO:0000255" key="2"/>
<evidence type="ECO:0000255" key="3">
    <source>
        <dbReference type="PROSITE-ProRule" id="PRU00978"/>
    </source>
</evidence>
<evidence type="ECO:0000255" key="4">
    <source>
        <dbReference type="PROSITE-ProRule" id="PRU01147"/>
    </source>
</evidence>
<evidence type="ECO:0000256" key="5">
    <source>
        <dbReference type="SAM" id="MobiDB-lite"/>
    </source>
</evidence>
<evidence type="ECO:0000269" key="6">
    <source>
    </source>
</evidence>
<evidence type="ECO:0000269" key="7">
    <source>
    </source>
</evidence>
<evidence type="ECO:0000269" key="8">
    <source>
    </source>
</evidence>
<evidence type="ECO:0000269" key="9">
    <source>
    </source>
</evidence>
<evidence type="ECO:0000303" key="10">
    <source ref="1"/>
</evidence>
<evidence type="ECO:0000305" key="11"/>
<protein>
    <recommendedName>
        <fullName>Transcription factor TGA6</fullName>
    </recommendedName>
    <alternativeName>
        <fullName>bZIP transcription factor 45</fullName>
        <shortName>AtbZIP45</shortName>
    </alternativeName>
</protein>
<comment type="function">
    <text evidence="1">Transcriptional activator that binds specifically to the DNA sequence 5'-TGACG-3'. Recognizes ocs elements like the as-1 motif of the cauliflower mosaic virus 35S promoter. Binding to the as-1-like cis elements mediate auxin- and salicylic acid-inducible transcription. May be involved in the induction of the systemic acquired resistance (SAR) via its interaction with NPR1. Could also bind to the Hex-motif (5'-TGACGTGG-3') another cis-acting element found in plant histone promoters (By similarity).</text>
</comment>
<comment type="subunit">
    <text evidence="6 7 8 9">Binds DNA as a dimer. Interacts with NPR1, NPR3 and NPR4. Interacts with GRXC9/GRX480.</text>
</comment>
<comment type="interaction">
    <interactant intactId="EBI-541321">
        <id>Q39140</id>
    </interactant>
    <interactant intactId="EBI-15206592">
        <id>Q9ZUM0</id>
        <label>At2g02160</label>
    </interactant>
    <organismsDiffer>false</organismsDiffer>
    <experiments>3</experiments>
</comment>
<comment type="interaction">
    <interactant intactId="EBI-541321">
        <id>Q39140</id>
    </interactant>
    <interactant intactId="EBI-1545762">
        <id>Q9SGP6</id>
        <label>GRXC9</label>
    </interactant>
    <organismsDiffer>false</organismsDiffer>
    <experiments>4</experiments>
</comment>
<comment type="interaction">
    <interactant intactId="EBI-541321">
        <id>Q39140</id>
    </interactant>
    <interactant intactId="EBI-1392127">
        <id>P93002</id>
        <label>NPR1</label>
    </interactant>
    <organismsDiffer>false</organismsDiffer>
    <experiments>5</experiments>
</comment>
<comment type="interaction">
    <interactant intactId="EBI-541321">
        <id>Q39140</id>
    </interactant>
    <interactant intactId="EBI-25523217">
        <id>Q9XE58</id>
        <label>SCL14</label>
    </interactant>
    <organismsDiffer>false</organismsDiffer>
    <experiments>3</experiments>
</comment>
<comment type="interaction">
    <interactant intactId="EBI-541321">
        <id>Q39140</id>
    </interactant>
    <interactant intactId="EBI-541366">
        <id>Q39234</id>
        <label>TGA3</label>
    </interactant>
    <organismsDiffer>false</organismsDiffer>
    <experiments>3</experiments>
</comment>
<comment type="interaction">
    <interactant intactId="EBI-541321">
        <id>Q39140</id>
    </interactant>
    <interactant intactId="EBI-541381">
        <id>Q39163</id>
        <label>TGA5</label>
    </interactant>
    <organismsDiffer>false</organismsDiffer>
    <experiments>3</experiments>
</comment>
<comment type="subcellular location">
    <subcellularLocation>
        <location>Nucleus</location>
    </subcellularLocation>
</comment>
<comment type="alternative products">
    <event type="alternative splicing"/>
    <isoform>
        <id>Q39140-1</id>
        <name>1</name>
        <sequence type="displayed"/>
    </isoform>
    <isoform>
        <id>Q39140-2</id>
        <name>2</name>
        <sequence type="described" ref="VSP_009468"/>
    </isoform>
</comment>
<comment type="tissue specificity">
    <text>Expressed predominantly in roots and flowers.</text>
</comment>
<comment type="developmental stage">
    <text>Expressed primarily in roots of young seedlings and later expressed in aging cotyledons, mesophyll cells of hydathodes on leaf margins, vascular tissue and trichomes of senescing rosette leaves. Also detected in young lateral roots and in mature pollen grains.</text>
</comment>
<comment type="miscellaneous">
    <molecule>Isoform 2</molecule>
    <text evidence="11">May be due to an intron retention.</text>
</comment>
<comment type="similarity">
    <text evidence="11">Belongs to the bZIP family.</text>
</comment>
<comment type="sequence caution" evidence="11">
    <conflict type="erroneous gene model prediction">
        <sequence resource="EMBL-CDS" id="BAB03134"/>
    </conflict>
</comment>
<feature type="chain" id="PRO_0000076558" description="Transcription factor TGA6">
    <location>
        <begin position="1"/>
        <end position="330"/>
    </location>
</feature>
<feature type="domain" description="bZIP" evidence="3">
    <location>
        <begin position="44"/>
        <end position="107"/>
    </location>
</feature>
<feature type="domain" description="DOG1" evidence="4">
    <location>
        <begin position="111"/>
        <end position="327"/>
    </location>
</feature>
<feature type="region of interest" description="Disordered" evidence="5">
    <location>
        <begin position="1"/>
        <end position="45"/>
    </location>
</feature>
<feature type="region of interest" description="Basic motif" evidence="3">
    <location>
        <begin position="46"/>
        <end position="66"/>
    </location>
</feature>
<feature type="region of interest" description="Leucine-zipper" evidence="3">
    <location>
        <begin position="72"/>
        <end position="86"/>
    </location>
</feature>
<feature type="coiled-coil region" evidence="2">
    <location>
        <begin position="45"/>
        <end position="142"/>
    </location>
</feature>
<feature type="coiled-coil region" evidence="2">
    <location>
        <begin position="217"/>
        <end position="233"/>
    </location>
</feature>
<feature type="compositionally biased region" description="Polar residues" evidence="5">
    <location>
        <begin position="1"/>
        <end position="13"/>
    </location>
</feature>
<feature type="compositionally biased region" description="Basic and acidic residues" evidence="5">
    <location>
        <begin position="15"/>
        <end position="27"/>
    </location>
</feature>
<feature type="compositionally biased region" description="Basic and acidic residues" evidence="5">
    <location>
        <begin position="35"/>
        <end position="45"/>
    </location>
</feature>
<feature type="splice variant" id="VSP_009468" description="In isoform 2." evidence="10">
    <original>MADTSSRTDVSTDGDTDHRDLG</original>
    <variation>MHSLNETVIPDVDYMQ</variation>
    <location>
        <begin position="1"/>
        <end position="22"/>
    </location>
</feature>
<feature type="sequence conflict" description="In Ref. 1; AAC37470." evidence="11" ref="1">
    <original>N</original>
    <variation>D</variation>
    <location>
        <position position="74"/>
    </location>
</feature>
<feature type="sequence conflict" description="In Ref. 1; AAC37470." evidence="11" ref="1">
    <original>L</original>
    <variation>V</variation>
    <location>
        <position position="82"/>
    </location>
</feature>
<feature type="sequence conflict" description="In Ref. 1; AAC37470/BAB03134." evidence="11" ref="1">
    <original>G</original>
    <variation>GG</variation>
    <location>
        <position position="110"/>
    </location>
</feature>
<feature type="sequence conflict" description="In Ref. 1; AAC37470." evidence="11" ref="1">
    <original>A</original>
    <variation>S</variation>
    <location>
        <position position="167"/>
    </location>
</feature>
<feature type="sequence conflict" description="In Ref. 1; AAC37470." evidence="11" ref="1">
    <original>R</original>
    <variation>P</variation>
    <location>
        <position position="194"/>
    </location>
</feature>
<feature type="sequence conflict" description="In Ref. 1; AAC37470." evidence="11" ref="1">
    <original>Q</original>
    <variation>K</variation>
    <location>
        <position position="272"/>
    </location>
</feature>
<gene>
    <name type="primary">TGA6</name>
    <name type="synonym">BZIP45</name>
    <name type="ordered locus">At3g12250</name>
    <name type="ORF">F28J15.6</name>
    <name type="ORF">MQC3.8</name>
</gene>
<reference key="1">
    <citation type="online journal article" date="1995" name="Plant Gene Register">
        <title>Isolation of TGA6, a new member of the TGA family of bZIP transcription factors in Arabidopsis thaliana.</title>
        <authorList>
            <person name="Xiang C."/>
            <person name="Miao Z.-H."/>
            <person name="Lam E."/>
        </authorList>
        <locator>PGR95-063</locator>
    </citation>
    <scope>NUCLEOTIDE SEQUENCE [MRNA] (ISOFORM 2)</scope>
    <source>
        <strain>cv. Columbia</strain>
        <tissue>Leaf</tissue>
    </source>
</reference>
<reference key="2">
    <citation type="journal article" date="2002" name="Trends Plant Sci.">
        <title>bZIP transcription factors in Arabidopsis.</title>
        <authorList>
            <person name="Jakoby M."/>
            <person name="Weisshaar B."/>
            <person name="Droege-Laser W."/>
            <person name="Vicente-Carbajosa J."/>
            <person name="Tiedemann J."/>
            <person name="Kroj T."/>
            <person name="Parcy F."/>
        </authorList>
    </citation>
    <scope>NUCLEOTIDE SEQUENCE [MRNA] (ISOFORM 1)</scope>
    <scope>GENE FAMILY</scope>
    <scope>NOMENCLATURE</scope>
    <source>
        <strain>cv. Columbia</strain>
    </source>
</reference>
<reference key="3">
    <citation type="journal article" date="2000" name="Nature">
        <title>Sequence and analysis of chromosome 3 of the plant Arabidopsis thaliana.</title>
        <authorList>
            <person name="Salanoubat M."/>
            <person name="Lemcke K."/>
            <person name="Rieger M."/>
            <person name="Ansorge W."/>
            <person name="Unseld M."/>
            <person name="Fartmann B."/>
            <person name="Valle G."/>
            <person name="Bloecker H."/>
            <person name="Perez-Alonso M."/>
            <person name="Obermaier B."/>
            <person name="Delseny M."/>
            <person name="Boutry M."/>
            <person name="Grivell L.A."/>
            <person name="Mache R."/>
            <person name="Puigdomenech P."/>
            <person name="De Simone V."/>
            <person name="Choisne N."/>
            <person name="Artiguenave F."/>
            <person name="Robert C."/>
            <person name="Brottier P."/>
            <person name="Wincker P."/>
            <person name="Cattolico L."/>
            <person name="Weissenbach J."/>
            <person name="Saurin W."/>
            <person name="Quetier F."/>
            <person name="Schaefer M."/>
            <person name="Mueller-Auer S."/>
            <person name="Gabel C."/>
            <person name="Fuchs M."/>
            <person name="Benes V."/>
            <person name="Wurmbach E."/>
            <person name="Drzonek H."/>
            <person name="Erfle H."/>
            <person name="Jordan N."/>
            <person name="Bangert S."/>
            <person name="Wiedelmann R."/>
            <person name="Kranz H."/>
            <person name="Voss H."/>
            <person name="Holland R."/>
            <person name="Brandt P."/>
            <person name="Nyakatura G."/>
            <person name="Vezzi A."/>
            <person name="D'Angelo M."/>
            <person name="Pallavicini A."/>
            <person name="Toppo S."/>
            <person name="Simionati B."/>
            <person name="Conrad A."/>
            <person name="Hornischer K."/>
            <person name="Kauer G."/>
            <person name="Loehnert T.-H."/>
            <person name="Nordsiek G."/>
            <person name="Reichelt J."/>
            <person name="Scharfe M."/>
            <person name="Schoen O."/>
            <person name="Bargues M."/>
            <person name="Terol J."/>
            <person name="Climent J."/>
            <person name="Navarro P."/>
            <person name="Collado C."/>
            <person name="Perez-Perez A."/>
            <person name="Ottenwaelder B."/>
            <person name="Duchemin D."/>
            <person name="Cooke R."/>
            <person name="Laudie M."/>
            <person name="Berger-Llauro C."/>
            <person name="Purnelle B."/>
            <person name="Masuy D."/>
            <person name="de Haan M."/>
            <person name="Maarse A.C."/>
            <person name="Alcaraz J.-P."/>
            <person name="Cottet A."/>
            <person name="Casacuberta E."/>
            <person name="Monfort A."/>
            <person name="Argiriou A."/>
            <person name="Flores M."/>
            <person name="Liguori R."/>
            <person name="Vitale D."/>
            <person name="Mannhaupt G."/>
            <person name="Haase D."/>
            <person name="Schoof H."/>
            <person name="Rudd S."/>
            <person name="Zaccaria P."/>
            <person name="Mewes H.-W."/>
            <person name="Mayer K.F.X."/>
            <person name="Kaul S."/>
            <person name="Town C.D."/>
            <person name="Koo H.L."/>
            <person name="Tallon L.J."/>
            <person name="Jenkins J."/>
            <person name="Rooney T."/>
            <person name="Rizzo M."/>
            <person name="Walts A."/>
            <person name="Utterback T."/>
            <person name="Fujii C.Y."/>
            <person name="Shea T.P."/>
            <person name="Creasy T.H."/>
            <person name="Haas B."/>
            <person name="Maiti R."/>
            <person name="Wu D."/>
            <person name="Peterson J."/>
            <person name="Van Aken S."/>
            <person name="Pai G."/>
            <person name="Militscher J."/>
            <person name="Sellers P."/>
            <person name="Gill J.E."/>
            <person name="Feldblyum T.V."/>
            <person name="Preuss D."/>
            <person name="Lin X."/>
            <person name="Nierman W.C."/>
            <person name="Salzberg S.L."/>
            <person name="White O."/>
            <person name="Venter J.C."/>
            <person name="Fraser C.M."/>
            <person name="Kaneko T."/>
            <person name="Nakamura Y."/>
            <person name="Sato S."/>
            <person name="Kato T."/>
            <person name="Asamizu E."/>
            <person name="Sasamoto S."/>
            <person name="Kimura T."/>
            <person name="Idesawa K."/>
            <person name="Kawashima K."/>
            <person name="Kishida Y."/>
            <person name="Kiyokawa C."/>
            <person name="Kohara M."/>
            <person name="Matsumoto M."/>
            <person name="Matsuno A."/>
            <person name="Muraki A."/>
            <person name="Nakayama S."/>
            <person name="Nakazaki N."/>
            <person name="Shinpo S."/>
            <person name="Takeuchi C."/>
            <person name="Wada T."/>
            <person name="Watanabe A."/>
            <person name="Yamada M."/>
            <person name="Yasuda M."/>
            <person name="Tabata S."/>
        </authorList>
    </citation>
    <scope>NUCLEOTIDE SEQUENCE [LARGE SCALE GENOMIC DNA]</scope>
    <source>
        <strain>cv. Columbia</strain>
    </source>
</reference>
<reference key="4">
    <citation type="journal article" date="2000" name="DNA Res.">
        <title>Structural analysis of Arabidopsis thaliana chromosome 3. II. Sequence features of the 4,251,695 bp regions covered by 90 P1, TAC and BAC clones.</title>
        <authorList>
            <person name="Kaneko T."/>
            <person name="Katoh T."/>
            <person name="Sato S."/>
            <person name="Nakamura Y."/>
            <person name="Asamizu E."/>
            <person name="Tabata S."/>
        </authorList>
    </citation>
    <scope>NUCLEOTIDE SEQUENCE [LARGE SCALE GENOMIC DNA]</scope>
    <source>
        <strain>cv. Columbia</strain>
    </source>
</reference>
<reference key="5">
    <citation type="journal article" date="2017" name="Plant J.">
        <title>Araport11: a complete reannotation of the Arabidopsis thaliana reference genome.</title>
        <authorList>
            <person name="Cheng C.Y."/>
            <person name="Krishnakumar V."/>
            <person name="Chan A.P."/>
            <person name="Thibaud-Nissen F."/>
            <person name="Schobel S."/>
            <person name="Town C.D."/>
        </authorList>
    </citation>
    <scope>GENOME REANNOTATION</scope>
    <source>
        <strain>cv. Columbia</strain>
    </source>
</reference>
<reference key="6">
    <citation type="journal article" date="1997" name="Plant Mol. Biol.">
        <title>DNA-binding properties, genomic organization and expression pattern of TGA6, a new member of the TGA family of bZIP transcription factors in Arabidopsis thaliana.</title>
        <authorList>
            <person name="Xiang C."/>
            <person name="Miao Z.-H."/>
            <person name="Lam E."/>
        </authorList>
    </citation>
    <scope>CHARACTERIZATION</scope>
    <scope>DNA-BINDING</scope>
</reference>
<reference key="7">
    <citation type="journal article" date="2000" name="Mol. Plant Microbe Interact.">
        <title>NPR1 differentially interacts with members of the TGA/OBF family of transcription factors that bind an element of the PR-1 gene required for induction by salicylic acid.</title>
        <authorList>
            <person name="Zhou J.-M."/>
            <person name="Trifa Y."/>
            <person name="Silva H."/>
            <person name="Pontier D."/>
            <person name="Lam E."/>
            <person name="Shah J."/>
            <person name="Klessig D.F."/>
        </authorList>
    </citation>
    <scope>INTERACTION WITH NPR1</scope>
</reference>
<reference key="8">
    <citation type="journal article" date="2005" name="Plant J.">
        <title>An Arabidopsis NPR1-like gene, NPR4, is required for disease resistance.</title>
        <authorList>
            <person name="Liu G."/>
            <person name="Holub E.B."/>
            <person name="Alonso J.M."/>
            <person name="Ecker J.R."/>
            <person name="Fobert P.R."/>
        </authorList>
    </citation>
    <scope>INTERACTION WITH NPR1 AND NPR4</scope>
</reference>
<reference key="9">
    <citation type="journal article" date="2006" name="Plant J.">
        <title>Negative regulation of defense responses in Arabidopsis by two NPR1 paralogs.</title>
        <authorList>
            <person name="Zhang Y."/>
            <person name="Cheng Y.T."/>
            <person name="Qu N."/>
            <person name="Zhao Q."/>
            <person name="Bi D."/>
            <person name="Li X."/>
        </authorList>
    </citation>
    <scope>INTERACTION WITH NPR3 AND NPR4</scope>
</reference>
<reference key="10">
    <citation type="journal article" date="2007" name="Plant J.">
        <title>SA-inducible Arabidopsis glutaredoxin interacts with TGA factors and suppresses JA-responsive PDF1.2 transcription.</title>
        <authorList>
            <person name="Ndamukong I."/>
            <person name="Abdallat A.A."/>
            <person name="Thurow C."/>
            <person name="Fode B."/>
            <person name="Zander M."/>
            <person name="Weigel R."/>
            <person name="Gatz C."/>
        </authorList>
    </citation>
    <scope>INTERACTION WITH GRXC9/GRX480</scope>
</reference>
<keyword id="KW-0010">Activator</keyword>
<keyword id="KW-0025">Alternative splicing</keyword>
<keyword id="KW-0175">Coiled coil</keyword>
<keyword id="KW-0238">DNA-binding</keyword>
<keyword id="KW-0539">Nucleus</keyword>
<keyword id="KW-1185">Reference proteome</keyword>
<keyword id="KW-0804">Transcription</keyword>
<keyword id="KW-0805">Transcription regulation</keyword>
<name>TGA6_ARATH</name>
<dbReference type="EMBL" id="L42327">
    <property type="protein sequence ID" value="AAC37470.1"/>
    <property type="molecule type" value="mRNA"/>
</dbReference>
<dbReference type="EMBL" id="AJ320540">
    <property type="protein sequence ID" value="CAC42807.1"/>
    <property type="molecule type" value="mRNA"/>
</dbReference>
<dbReference type="EMBL" id="AC069472">
    <property type="protein sequence ID" value="AAG51079.1"/>
    <property type="molecule type" value="Genomic_DNA"/>
</dbReference>
<dbReference type="EMBL" id="AP002047">
    <property type="protein sequence ID" value="BAB03134.1"/>
    <property type="status" value="ALT_SEQ"/>
    <property type="molecule type" value="Genomic_DNA"/>
</dbReference>
<dbReference type="EMBL" id="CP002686">
    <property type="protein sequence ID" value="AEE75172.1"/>
    <property type="molecule type" value="Genomic_DNA"/>
</dbReference>
<dbReference type="EMBL" id="CP002686">
    <property type="protein sequence ID" value="AEE75173.1"/>
    <property type="molecule type" value="Genomic_DNA"/>
</dbReference>
<dbReference type="EMBL" id="CP002686">
    <property type="protein sequence ID" value="AEE75174.1"/>
    <property type="molecule type" value="Genomic_DNA"/>
</dbReference>
<dbReference type="EMBL" id="CP002686">
    <property type="protein sequence ID" value="ANM63961.1"/>
    <property type="molecule type" value="Genomic_DNA"/>
</dbReference>
<dbReference type="EMBL" id="CP002686">
    <property type="protein sequence ID" value="ANM63962.1"/>
    <property type="molecule type" value="Genomic_DNA"/>
</dbReference>
<dbReference type="RefSeq" id="NP_001326019.1">
    <molecule id="Q39140-1"/>
    <property type="nucleotide sequence ID" value="NM_001337984.1"/>
</dbReference>
<dbReference type="RefSeq" id="NP_001326020.1">
    <molecule id="Q39140-1"/>
    <property type="nucleotide sequence ID" value="NM_001337985.1"/>
</dbReference>
<dbReference type="RefSeq" id="NP_566415.3">
    <molecule id="Q39140-1"/>
    <property type="nucleotide sequence ID" value="NM_112061.6"/>
</dbReference>
<dbReference type="RefSeq" id="NP_974292.1">
    <molecule id="Q39140-1"/>
    <property type="nucleotide sequence ID" value="NM_202563.3"/>
</dbReference>
<dbReference type="RefSeq" id="NP_974293.1">
    <molecule id="Q39140-2"/>
    <property type="nucleotide sequence ID" value="NM_202564.2"/>
</dbReference>
<dbReference type="SMR" id="Q39140"/>
<dbReference type="BioGRID" id="5739">
    <property type="interactions" value="16"/>
</dbReference>
<dbReference type="FunCoup" id="Q39140">
    <property type="interactions" value="802"/>
</dbReference>
<dbReference type="IntAct" id="Q39140">
    <property type="interactions" value="15"/>
</dbReference>
<dbReference type="STRING" id="3702.Q39140"/>
<dbReference type="iPTMnet" id="Q39140"/>
<dbReference type="PaxDb" id="3702-AT3G12250.4"/>
<dbReference type="ProteomicsDB" id="234213">
    <molecule id="Q39140-1"/>
</dbReference>
<dbReference type="EnsemblPlants" id="AT3G12250.1">
    <molecule id="Q39140-1"/>
    <property type="protein sequence ID" value="AT3G12250.1"/>
    <property type="gene ID" value="AT3G12250"/>
</dbReference>
<dbReference type="EnsemblPlants" id="AT3G12250.2">
    <molecule id="Q39140-1"/>
    <property type="protein sequence ID" value="AT3G12250.2"/>
    <property type="gene ID" value="AT3G12250"/>
</dbReference>
<dbReference type="EnsemblPlants" id="AT3G12250.3">
    <molecule id="Q39140-2"/>
    <property type="protein sequence ID" value="AT3G12250.3"/>
    <property type="gene ID" value="AT3G12250"/>
</dbReference>
<dbReference type="EnsemblPlants" id="AT3G12250.6">
    <molecule id="Q39140-1"/>
    <property type="protein sequence ID" value="AT3G12250.6"/>
    <property type="gene ID" value="AT3G12250"/>
</dbReference>
<dbReference type="EnsemblPlants" id="AT3G12250.7">
    <molecule id="Q39140-1"/>
    <property type="protein sequence ID" value="AT3G12250.7"/>
    <property type="gene ID" value="AT3G12250"/>
</dbReference>
<dbReference type="GeneID" id="820405"/>
<dbReference type="Gramene" id="AT3G12250.1">
    <molecule id="Q39140-1"/>
    <property type="protein sequence ID" value="AT3G12250.1"/>
    <property type="gene ID" value="AT3G12250"/>
</dbReference>
<dbReference type="Gramene" id="AT3G12250.2">
    <molecule id="Q39140-1"/>
    <property type="protein sequence ID" value="AT3G12250.2"/>
    <property type="gene ID" value="AT3G12250"/>
</dbReference>
<dbReference type="Gramene" id="AT3G12250.3">
    <molecule id="Q39140-2"/>
    <property type="protein sequence ID" value="AT3G12250.3"/>
    <property type="gene ID" value="AT3G12250"/>
</dbReference>
<dbReference type="Gramene" id="AT3G12250.6">
    <molecule id="Q39140-1"/>
    <property type="protein sequence ID" value="AT3G12250.6"/>
    <property type="gene ID" value="AT3G12250"/>
</dbReference>
<dbReference type="Gramene" id="AT3G12250.7">
    <molecule id="Q39140-1"/>
    <property type="protein sequence ID" value="AT3G12250.7"/>
    <property type="gene ID" value="AT3G12250"/>
</dbReference>
<dbReference type="KEGG" id="ath:AT3G12250"/>
<dbReference type="Araport" id="AT3G12250"/>
<dbReference type="TAIR" id="AT3G12250">
    <property type="gene designation" value="TGA6"/>
</dbReference>
<dbReference type="eggNOG" id="ENOG502QU32">
    <property type="taxonomic scope" value="Eukaryota"/>
</dbReference>
<dbReference type="InParanoid" id="Q39140"/>
<dbReference type="OrthoDB" id="2015618at2759"/>
<dbReference type="PhylomeDB" id="Q39140"/>
<dbReference type="PRO" id="PR:Q39140"/>
<dbReference type="Proteomes" id="UP000006548">
    <property type="component" value="Chromosome 3"/>
</dbReference>
<dbReference type="ExpressionAtlas" id="Q39140">
    <property type="expression patterns" value="baseline and differential"/>
</dbReference>
<dbReference type="GO" id="GO:0005634">
    <property type="term" value="C:nucleus"/>
    <property type="evidence" value="ECO:0007669"/>
    <property type="project" value="UniProtKB-SubCell"/>
</dbReference>
<dbReference type="GO" id="GO:0003700">
    <property type="term" value="F:DNA-binding transcription factor activity"/>
    <property type="evidence" value="ECO:0007669"/>
    <property type="project" value="InterPro"/>
</dbReference>
<dbReference type="GO" id="GO:0016787">
    <property type="term" value="F:hydrolase activity"/>
    <property type="evidence" value="ECO:0007669"/>
    <property type="project" value="InterPro"/>
</dbReference>
<dbReference type="GO" id="GO:0046872">
    <property type="term" value="F:metal ion binding"/>
    <property type="evidence" value="ECO:0007669"/>
    <property type="project" value="InterPro"/>
</dbReference>
<dbReference type="GO" id="GO:0000976">
    <property type="term" value="F:transcription cis-regulatory region binding"/>
    <property type="evidence" value="ECO:0007669"/>
    <property type="project" value="UniProtKB-ARBA"/>
</dbReference>
<dbReference type="GO" id="GO:0006351">
    <property type="term" value="P:DNA-templated transcription"/>
    <property type="evidence" value="ECO:0007669"/>
    <property type="project" value="InterPro"/>
</dbReference>
<dbReference type="FunFam" id="1.20.5.170:FF:000019">
    <property type="entry name" value="BZIP family transcription factor"/>
    <property type="match status" value="1"/>
</dbReference>
<dbReference type="Gene3D" id="1.20.5.170">
    <property type="match status" value="1"/>
</dbReference>
<dbReference type="InterPro" id="IPR004827">
    <property type="entry name" value="bZIP"/>
</dbReference>
<dbReference type="InterPro" id="IPR046347">
    <property type="entry name" value="bZIP_sf"/>
</dbReference>
<dbReference type="InterPro" id="IPR018524">
    <property type="entry name" value="DNA/RNA_endonuclease_AS"/>
</dbReference>
<dbReference type="InterPro" id="IPR025422">
    <property type="entry name" value="TGA_domain"/>
</dbReference>
<dbReference type="PANTHER" id="PTHR45693:SF46">
    <property type="entry name" value="TRANSCRIPTION FACTOR TGA2-RELATED"/>
    <property type="match status" value="1"/>
</dbReference>
<dbReference type="PANTHER" id="PTHR45693">
    <property type="entry name" value="TRANSCRIPTION FACTOR TGA9"/>
    <property type="match status" value="1"/>
</dbReference>
<dbReference type="Pfam" id="PF00170">
    <property type="entry name" value="bZIP_1"/>
    <property type="match status" value="1"/>
</dbReference>
<dbReference type="Pfam" id="PF14144">
    <property type="entry name" value="DOG1"/>
    <property type="match status" value="1"/>
</dbReference>
<dbReference type="SMART" id="SM00338">
    <property type="entry name" value="BRLZ"/>
    <property type="match status" value="1"/>
</dbReference>
<dbReference type="SUPFAM" id="SSF57959">
    <property type="entry name" value="Leucine zipper domain"/>
    <property type="match status" value="1"/>
</dbReference>
<dbReference type="PROSITE" id="PS50217">
    <property type="entry name" value="BZIP"/>
    <property type="match status" value="1"/>
</dbReference>
<dbReference type="PROSITE" id="PS00036">
    <property type="entry name" value="BZIP_BASIC"/>
    <property type="match status" value="1"/>
</dbReference>
<dbReference type="PROSITE" id="PS51806">
    <property type="entry name" value="DOG1"/>
    <property type="match status" value="1"/>
</dbReference>